<accession>P34159</accession>
<dbReference type="EMBL" id="X65276">
    <property type="protein sequence ID" value="CAA46375.1"/>
    <property type="molecule type" value="Genomic_DNA"/>
</dbReference>
<dbReference type="EMBL" id="AE001437">
    <property type="protein sequence ID" value="AAK81633.1"/>
    <property type="molecule type" value="Genomic_DNA"/>
</dbReference>
<dbReference type="PIR" id="F97355">
    <property type="entry name" value="F97355"/>
</dbReference>
<dbReference type="RefSeq" id="NP_350293.1">
    <property type="nucleotide sequence ID" value="NC_003030.1"/>
</dbReference>
<dbReference type="RefSeq" id="WP_010966973.1">
    <property type="nucleotide sequence ID" value="NC_003030.1"/>
</dbReference>
<dbReference type="SMR" id="P34159"/>
<dbReference type="STRING" id="272562.CA_C3713"/>
<dbReference type="KEGG" id="cac:CA_C3713"/>
<dbReference type="PATRIC" id="fig|272562.8.peg.3902"/>
<dbReference type="eggNOG" id="COG4842">
    <property type="taxonomic scope" value="Bacteria"/>
</dbReference>
<dbReference type="HOGENOM" id="CLU_158563_0_0_9"/>
<dbReference type="OrthoDB" id="2083166at2"/>
<dbReference type="Proteomes" id="UP000000814">
    <property type="component" value="Chromosome"/>
</dbReference>
<dbReference type="Gene3D" id="1.10.287.1060">
    <property type="entry name" value="ESAT-6-like"/>
    <property type="match status" value="1"/>
</dbReference>
<dbReference type="InterPro" id="IPR036689">
    <property type="entry name" value="ESAT-6-like_sf"/>
</dbReference>
<dbReference type="InterPro" id="IPR010310">
    <property type="entry name" value="T7SS_ESAT-6-like"/>
</dbReference>
<dbReference type="NCBIfam" id="TIGR03930">
    <property type="entry name" value="WXG100_ESAT6"/>
    <property type="match status" value="1"/>
</dbReference>
<dbReference type="Pfam" id="PF06013">
    <property type="entry name" value="WXG100"/>
    <property type="match status" value="1"/>
</dbReference>
<dbReference type="SUPFAM" id="SSF140453">
    <property type="entry name" value="EsxAB dimer-like"/>
    <property type="match status" value="1"/>
</dbReference>
<keyword id="KW-0175">Coiled coil</keyword>
<keyword id="KW-1185">Reference proteome</keyword>
<name>Y3713_CLOAB</name>
<gene>
    <name type="ordered locus">CA_C3713</name>
</gene>
<comment type="similarity">
    <text evidence="2">Belongs to the WXG100 family. sagEsxA-like subfamily.</text>
</comment>
<organism>
    <name type="scientific">Clostridium acetobutylicum (strain ATCC 824 / DSM 792 / JCM 1419 / IAM 19013 / LMG 5710 / NBRC 13948 / NRRL B-527 / VKM B-1787 / 2291 / W)</name>
    <dbReference type="NCBI Taxonomy" id="272562"/>
    <lineage>
        <taxon>Bacteria</taxon>
        <taxon>Bacillati</taxon>
        <taxon>Bacillota</taxon>
        <taxon>Clostridia</taxon>
        <taxon>Eubacteriales</taxon>
        <taxon>Clostridiaceae</taxon>
        <taxon>Clostridium</taxon>
    </lineage>
</organism>
<evidence type="ECO:0000255" key="1"/>
<evidence type="ECO:0000305" key="2">
    <source>
    </source>
</evidence>
<proteinExistence type="inferred from homology"/>
<protein>
    <recommendedName>
        <fullName>Uncharacterized protein CA_C3713</fullName>
    </recommendedName>
</protein>
<feature type="chain" id="PRO_0000207117" description="Uncharacterized protein CA_C3713">
    <location>
        <begin position="1"/>
        <end position="96"/>
    </location>
</feature>
<feature type="coiled-coil region" evidence="1">
    <location>
        <begin position="9"/>
        <end position="86"/>
    </location>
</feature>
<sequence length="96" mass="11003">MAQISVTPEELKSQAQVYIQSKEEIDQAIQKVNSMNSTIAEEWKGQAFQAYLEQYNQLHQTVVQFENLLESVNQQLNKYADTVAERDAQDAQSFGF</sequence>
<reference key="1">
    <citation type="journal article" date="1993" name="J. Bacteriol.">
        <title>Sequence and molecular characterization of a DNA region encoding a small heat shock protein of Clostridium acetobutylicum.</title>
        <authorList>
            <person name="Sauer U."/>
            <person name="Duerre P."/>
        </authorList>
    </citation>
    <scope>NUCLEOTIDE SEQUENCE [GENOMIC DNA]</scope>
    <source>
        <strain>ATCC 824 / DSM 792 / JCM 1419 / IAM 19013 / LMG 5710 / NBRC 13948 / NRRL B-527 / VKM B-1787 / 2291 / W</strain>
    </source>
</reference>
<reference key="2">
    <citation type="journal article" date="2001" name="J. Bacteriol.">
        <title>Genome sequence and comparative analysis of the solvent-producing bacterium Clostridium acetobutylicum.</title>
        <authorList>
            <person name="Noelling J."/>
            <person name="Breton G."/>
            <person name="Omelchenko M.V."/>
            <person name="Makarova K.S."/>
            <person name="Zeng Q."/>
            <person name="Gibson R."/>
            <person name="Lee H.M."/>
            <person name="Dubois J."/>
            <person name="Qiu D."/>
            <person name="Hitti J."/>
            <person name="Wolf Y.I."/>
            <person name="Tatusov R.L."/>
            <person name="Sabathe F."/>
            <person name="Doucette-Stamm L.A."/>
            <person name="Soucaille P."/>
            <person name="Daly M.J."/>
            <person name="Bennett G.N."/>
            <person name="Koonin E.V."/>
            <person name="Smith D.R."/>
        </authorList>
    </citation>
    <scope>NUCLEOTIDE SEQUENCE [LARGE SCALE GENOMIC DNA]</scope>
    <source>
        <strain>ATCC 824 / DSM 792 / JCM 1419 / IAM 19013 / LMG 5710 / NBRC 13948 / NRRL B-527 / VKM B-1787 / 2291 / W</strain>
    </source>
</reference>
<reference key="3">
    <citation type="journal article" date="2014" name="PLoS ONE">
        <title>WXG100 protein superfamily consists of three subfamilies and exhibits an alpha-helical C-terminal conserved residue pattern.</title>
        <authorList>
            <person name="Poulsen C."/>
            <person name="Panjikar S."/>
            <person name="Holton S.J."/>
            <person name="Wilmanns M."/>
            <person name="Song Y.H."/>
        </authorList>
    </citation>
    <scope>DISCUSSION OF SEQUENCE</scope>
</reference>